<keyword id="KW-0067">ATP-binding</keyword>
<keyword id="KW-0173">Coenzyme A biosynthesis</keyword>
<keyword id="KW-0963">Cytoplasm</keyword>
<keyword id="KW-0460">Magnesium</keyword>
<keyword id="KW-0547">Nucleotide-binding</keyword>
<keyword id="KW-0548">Nucleotidyltransferase</keyword>
<keyword id="KW-0808">Transferase</keyword>
<organism>
    <name type="scientific">Klebsiella pneumoniae (strain 342)</name>
    <dbReference type="NCBI Taxonomy" id="507522"/>
    <lineage>
        <taxon>Bacteria</taxon>
        <taxon>Pseudomonadati</taxon>
        <taxon>Pseudomonadota</taxon>
        <taxon>Gammaproteobacteria</taxon>
        <taxon>Enterobacterales</taxon>
        <taxon>Enterobacteriaceae</taxon>
        <taxon>Klebsiella/Raoultella group</taxon>
        <taxon>Klebsiella</taxon>
        <taxon>Klebsiella pneumoniae complex</taxon>
    </lineage>
</organism>
<evidence type="ECO:0000255" key="1">
    <source>
        <dbReference type="HAMAP-Rule" id="MF_00151"/>
    </source>
</evidence>
<accession>B5XTG9</accession>
<sequence length="159" mass="17622">MSTKAIYPGTFDPITNGHIDIVTRAASMFDKVVLAIAASPSKKPMFTLDERIALATQATAHLVNVEVIGFSDLMASFARAQQANILIRGLRAVADFEYEMQLAHMNRHLMPTLESVFLMPCKEWSFISSSLVKEVARHQGDVSHFLPANVHQALLNKLK</sequence>
<protein>
    <recommendedName>
        <fullName evidence="1">Phosphopantetheine adenylyltransferase</fullName>
        <ecNumber evidence="1">2.7.7.3</ecNumber>
    </recommendedName>
    <alternativeName>
        <fullName evidence="1">Dephospho-CoA pyrophosphorylase</fullName>
    </alternativeName>
    <alternativeName>
        <fullName evidence="1">Pantetheine-phosphate adenylyltransferase</fullName>
        <shortName evidence="1">PPAT</shortName>
    </alternativeName>
</protein>
<name>COAD_KLEP3</name>
<proteinExistence type="inferred from homology"/>
<gene>
    <name evidence="1" type="primary">coaD</name>
    <name type="ordered locus">KPK_0120</name>
</gene>
<feature type="chain" id="PRO_1000096804" description="Phosphopantetheine adenylyltransferase">
    <location>
        <begin position="1"/>
        <end position="159"/>
    </location>
</feature>
<feature type="binding site" evidence="1">
    <location>
        <begin position="10"/>
        <end position="11"/>
    </location>
    <ligand>
        <name>ATP</name>
        <dbReference type="ChEBI" id="CHEBI:30616"/>
    </ligand>
</feature>
<feature type="binding site" evidence="1">
    <location>
        <position position="10"/>
    </location>
    <ligand>
        <name>substrate</name>
    </ligand>
</feature>
<feature type="binding site" evidence="1">
    <location>
        <position position="18"/>
    </location>
    <ligand>
        <name>ATP</name>
        <dbReference type="ChEBI" id="CHEBI:30616"/>
    </ligand>
</feature>
<feature type="binding site" evidence="1">
    <location>
        <position position="42"/>
    </location>
    <ligand>
        <name>substrate</name>
    </ligand>
</feature>
<feature type="binding site" evidence="1">
    <location>
        <position position="74"/>
    </location>
    <ligand>
        <name>substrate</name>
    </ligand>
</feature>
<feature type="binding site" evidence="1">
    <location>
        <position position="88"/>
    </location>
    <ligand>
        <name>substrate</name>
    </ligand>
</feature>
<feature type="binding site" evidence="1">
    <location>
        <begin position="89"/>
        <end position="91"/>
    </location>
    <ligand>
        <name>ATP</name>
        <dbReference type="ChEBI" id="CHEBI:30616"/>
    </ligand>
</feature>
<feature type="binding site" evidence="1">
    <location>
        <position position="99"/>
    </location>
    <ligand>
        <name>ATP</name>
        <dbReference type="ChEBI" id="CHEBI:30616"/>
    </ligand>
</feature>
<feature type="binding site" evidence="1">
    <location>
        <begin position="124"/>
        <end position="130"/>
    </location>
    <ligand>
        <name>ATP</name>
        <dbReference type="ChEBI" id="CHEBI:30616"/>
    </ligand>
</feature>
<feature type="site" description="Transition state stabilizer" evidence="1">
    <location>
        <position position="18"/>
    </location>
</feature>
<reference key="1">
    <citation type="journal article" date="2008" name="PLoS Genet.">
        <title>Complete genome sequence of the N2-fixing broad host range endophyte Klebsiella pneumoniae 342 and virulence predictions verified in mice.</title>
        <authorList>
            <person name="Fouts D.E."/>
            <person name="Tyler H.L."/>
            <person name="DeBoy R.T."/>
            <person name="Daugherty S."/>
            <person name="Ren Q."/>
            <person name="Badger J.H."/>
            <person name="Durkin A.S."/>
            <person name="Huot H."/>
            <person name="Shrivastava S."/>
            <person name="Kothari S."/>
            <person name="Dodson R.J."/>
            <person name="Mohamoud Y."/>
            <person name="Khouri H."/>
            <person name="Roesch L.F.W."/>
            <person name="Krogfelt K.A."/>
            <person name="Struve C."/>
            <person name="Triplett E.W."/>
            <person name="Methe B.A."/>
        </authorList>
    </citation>
    <scope>NUCLEOTIDE SEQUENCE [LARGE SCALE GENOMIC DNA]</scope>
    <source>
        <strain>342</strain>
    </source>
</reference>
<comment type="function">
    <text evidence="1">Reversibly transfers an adenylyl group from ATP to 4'-phosphopantetheine, yielding dephospho-CoA (dPCoA) and pyrophosphate.</text>
</comment>
<comment type="catalytic activity">
    <reaction evidence="1">
        <text>(R)-4'-phosphopantetheine + ATP + H(+) = 3'-dephospho-CoA + diphosphate</text>
        <dbReference type="Rhea" id="RHEA:19801"/>
        <dbReference type="ChEBI" id="CHEBI:15378"/>
        <dbReference type="ChEBI" id="CHEBI:30616"/>
        <dbReference type="ChEBI" id="CHEBI:33019"/>
        <dbReference type="ChEBI" id="CHEBI:57328"/>
        <dbReference type="ChEBI" id="CHEBI:61723"/>
        <dbReference type="EC" id="2.7.7.3"/>
    </reaction>
</comment>
<comment type="cofactor">
    <cofactor evidence="1">
        <name>Mg(2+)</name>
        <dbReference type="ChEBI" id="CHEBI:18420"/>
    </cofactor>
</comment>
<comment type="pathway">
    <text evidence="1">Cofactor biosynthesis; coenzyme A biosynthesis; CoA from (R)-pantothenate: step 4/5.</text>
</comment>
<comment type="subunit">
    <text evidence="1">Homohexamer.</text>
</comment>
<comment type="subcellular location">
    <subcellularLocation>
        <location evidence="1">Cytoplasm</location>
    </subcellularLocation>
</comment>
<comment type="similarity">
    <text evidence="1">Belongs to the bacterial CoaD family.</text>
</comment>
<dbReference type="EC" id="2.7.7.3" evidence="1"/>
<dbReference type="EMBL" id="CP000964">
    <property type="protein sequence ID" value="ACI06852.1"/>
    <property type="molecule type" value="Genomic_DNA"/>
</dbReference>
<dbReference type="SMR" id="B5XTG9"/>
<dbReference type="KEGG" id="kpe:KPK_0120"/>
<dbReference type="HOGENOM" id="CLU_100149_0_1_6"/>
<dbReference type="UniPathway" id="UPA00241">
    <property type="reaction ID" value="UER00355"/>
</dbReference>
<dbReference type="Proteomes" id="UP000001734">
    <property type="component" value="Chromosome"/>
</dbReference>
<dbReference type="GO" id="GO:0005737">
    <property type="term" value="C:cytoplasm"/>
    <property type="evidence" value="ECO:0007669"/>
    <property type="project" value="UniProtKB-SubCell"/>
</dbReference>
<dbReference type="GO" id="GO:0005524">
    <property type="term" value="F:ATP binding"/>
    <property type="evidence" value="ECO:0007669"/>
    <property type="project" value="UniProtKB-KW"/>
</dbReference>
<dbReference type="GO" id="GO:0004595">
    <property type="term" value="F:pantetheine-phosphate adenylyltransferase activity"/>
    <property type="evidence" value="ECO:0007669"/>
    <property type="project" value="UniProtKB-UniRule"/>
</dbReference>
<dbReference type="GO" id="GO:0015937">
    <property type="term" value="P:coenzyme A biosynthetic process"/>
    <property type="evidence" value="ECO:0007669"/>
    <property type="project" value="UniProtKB-UniRule"/>
</dbReference>
<dbReference type="CDD" id="cd02163">
    <property type="entry name" value="PPAT"/>
    <property type="match status" value="1"/>
</dbReference>
<dbReference type="FunFam" id="3.40.50.620:FF:000012">
    <property type="entry name" value="Phosphopantetheine adenylyltransferase"/>
    <property type="match status" value="1"/>
</dbReference>
<dbReference type="Gene3D" id="3.40.50.620">
    <property type="entry name" value="HUPs"/>
    <property type="match status" value="1"/>
</dbReference>
<dbReference type="HAMAP" id="MF_00151">
    <property type="entry name" value="PPAT_bact"/>
    <property type="match status" value="1"/>
</dbReference>
<dbReference type="InterPro" id="IPR004821">
    <property type="entry name" value="Cyt_trans-like"/>
</dbReference>
<dbReference type="InterPro" id="IPR001980">
    <property type="entry name" value="PPAT"/>
</dbReference>
<dbReference type="InterPro" id="IPR014729">
    <property type="entry name" value="Rossmann-like_a/b/a_fold"/>
</dbReference>
<dbReference type="NCBIfam" id="TIGR01510">
    <property type="entry name" value="coaD_prev_kdtB"/>
    <property type="match status" value="1"/>
</dbReference>
<dbReference type="NCBIfam" id="TIGR00125">
    <property type="entry name" value="cyt_tran_rel"/>
    <property type="match status" value="1"/>
</dbReference>
<dbReference type="PANTHER" id="PTHR21342">
    <property type="entry name" value="PHOSPHOPANTETHEINE ADENYLYLTRANSFERASE"/>
    <property type="match status" value="1"/>
</dbReference>
<dbReference type="PANTHER" id="PTHR21342:SF1">
    <property type="entry name" value="PHOSPHOPANTETHEINE ADENYLYLTRANSFERASE"/>
    <property type="match status" value="1"/>
</dbReference>
<dbReference type="Pfam" id="PF01467">
    <property type="entry name" value="CTP_transf_like"/>
    <property type="match status" value="1"/>
</dbReference>
<dbReference type="PRINTS" id="PR01020">
    <property type="entry name" value="LPSBIOSNTHSS"/>
</dbReference>
<dbReference type="SUPFAM" id="SSF52374">
    <property type="entry name" value="Nucleotidylyl transferase"/>
    <property type="match status" value="1"/>
</dbReference>